<gene>
    <name type="ORF">FV3-037R</name>
</gene>
<dbReference type="EMBL" id="AY548484">
    <property type="protein sequence ID" value="AAT09696.1"/>
    <property type="molecule type" value="Genomic_DNA"/>
</dbReference>
<dbReference type="RefSeq" id="YP_031615.1">
    <property type="nucleotide sequence ID" value="NC_005946.1"/>
</dbReference>
<dbReference type="SMR" id="Q6GZT9"/>
<dbReference type="KEGG" id="vg:2947816"/>
<dbReference type="Proteomes" id="UP000008770">
    <property type="component" value="Segment"/>
</dbReference>
<dbReference type="GO" id="GO:0016787">
    <property type="term" value="F:hydrolase activity"/>
    <property type="evidence" value="ECO:0007669"/>
    <property type="project" value="UniProtKB-KW"/>
</dbReference>
<dbReference type="Gene3D" id="3.40.50.1000">
    <property type="entry name" value="HAD superfamily/HAD-like"/>
    <property type="match status" value="1"/>
</dbReference>
<dbReference type="InterPro" id="IPR004274">
    <property type="entry name" value="FCP1_dom"/>
</dbReference>
<dbReference type="InterPro" id="IPR036412">
    <property type="entry name" value="HAD-like_sf"/>
</dbReference>
<dbReference type="InterPro" id="IPR023214">
    <property type="entry name" value="HAD_sf"/>
</dbReference>
<dbReference type="InterPro" id="IPR050365">
    <property type="entry name" value="TIM50"/>
</dbReference>
<dbReference type="PANTHER" id="PTHR12210">
    <property type="entry name" value="DULLARD PROTEIN PHOSPHATASE"/>
    <property type="match status" value="1"/>
</dbReference>
<dbReference type="Pfam" id="PF03031">
    <property type="entry name" value="NIF"/>
    <property type="match status" value="1"/>
</dbReference>
<dbReference type="SMART" id="SM00577">
    <property type="entry name" value="CPDc"/>
    <property type="match status" value="1"/>
</dbReference>
<dbReference type="SUPFAM" id="SSF56784">
    <property type="entry name" value="HAD-like"/>
    <property type="match status" value="1"/>
</dbReference>
<dbReference type="PROSITE" id="PS50969">
    <property type="entry name" value="FCP1"/>
    <property type="match status" value="1"/>
</dbReference>
<organismHost>
    <name type="scientific">Dryophytes versicolor</name>
    <name type="common">chameleon treefrog</name>
    <dbReference type="NCBI Taxonomy" id="30343"/>
</organismHost>
<organismHost>
    <name type="scientific">Lithobates pipiens</name>
    <name type="common">Northern leopard frog</name>
    <name type="synonym">Rana pipiens</name>
    <dbReference type="NCBI Taxonomy" id="8404"/>
</organismHost>
<organismHost>
    <name type="scientific">Lithobates sylvaticus</name>
    <name type="common">Wood frog</name>
    <name type="synonym">Rana sylvatica</name>
    <dbReference type="NCBI Taxonomy" id="45438"/>
</organismHost>
<organismHost>
    <name type="scientific">Notophthalmus viridescens</name>
    <name type="common">Eastern newt</name>
    <name type="synonym">Triturus viridescens</name>
    <dbReference type="NCBI Taxonomy" id="8316"/>
</organismHost>
<protein>
    <recommendedName>
        <fullName>uncharacterized protein 037R</fullName>
    </recommendedName>
</protein>
<proteinExistence type="predicted"/>
<feature type="chain" id="PRO_0000410500" description="uncharacterized protein 037R">
    <location>
        <begin position="1"/>
        <end position="209"/>
    </location>
</feature>
<feature type="domain" description="FCP1 homology" evidence="1">
    <location>
        <begin position="1"/>
        <end position="199"/>
    </location>
</feature>
<keyword id="KW-0378">Hydrolase</keyword>
<keyword id="KW-1185">Reference proteome</keyword>
<accession>Q6GZT9</accession>
<reference key="1">
    <citation type="journal article" date="2004" name="Virology">
        <title>Comparative genomic analyses of frog virus 3, type species of the genus Ranavirus (family Iridoviridae).</title>
        <authorList>
            <person name="Tan W.G."/>
            <person name="Barkman T.J."/>
            <person name="Gregory Chinchar V."/>
            <person name="Essani K."/>
        </authorList>
    </citation>
    <scope>NUCLEOTIDE SEQUENCE [LARGE SCALE GENOMIC DNA]</scope>
</reference>
<name>037R_FRG3G</name>
<sequence>MQVFLDLDETLIHSIPVSRLGWTKSKPYPVKPFTVQDAGTPLSVMMGSSKAVNDGRKRLATRLSLFKRTVLTDHIMCWRPTLRTFLNGLFASGYKINVWTAASKPYALEVVKALNLKSYGMGLLVTAQDYPKGSVKRLKYLTGLDAVKIPLSNTAIVDDREEVKRAQPTRAVHIKPFTASSANTACSESDELKRVTASLAIIAGRSRRR</sequence>
<organism>
    <name type="scientific">Frog virus 3 (isolate Goorha)</name>
    <name type="common">FV-3</name>
    <dbReference type="NCBI Taxonomy" id="654924"/>
    <lineage>
        <taxon>Viruses</taxon>
        <taxon>Varidnaviria</taxon>
        <taxon>Bamfordvirae</taxon>
        <taxon>Nucleocytoviricota</taxon>
        <taxon>Megaviricetes</taxon>
        <taxon>Pimascovirales</taxon>
        <taxon>Iridoviridae</taxon>
        <taxon>Alphairidovirinae</taxon>
        <taxon>Ranavirus</taxon>
        <taxon>Frog virus 3</taxon>
    </lineage>
</organism>
<evidence type="ECO:0000255" key="1">
    <source>
        <dbReference type="PROSITE-ProRule" id="PRU00336"/>
    </source>
</evidence>